<protein>
    <recommendedName>
        <fullName evidence="1">Uracil phosphoribosyltransferase</fullName>
        <ecNumber evidence="1">2.4.2.9</ecNumber>
    </recommendedName>
    <alternativeName>
        <fullName evidence="1">UMP pyrophosphorylase</fullName>
    </alternativeName>
    <alternativeName>
        <fullName evidence="1">UPRTase</fullName>
    </alternativeName>
</protein>
<organism>
    <name type="scientific">Escherichia coli O6:H1 (strain CFT073 / ATCC 700928 / UPEC)</name>
    <dbReference type="NCBI Taxonomy" id="199310"/>
    <lineage>
        <taxon>Bacteria</taxon>
        <taxon>Pseudomonadati</taxon>
        <taxon>Pseudomonadota</taxon>
        <taxon>Gammaproteobacteria</taxon>
        <taxon>Enterobacterales</taxon>
        <taxon>Enterobacteriaceae</taxon>
        <taxon>Escherichia</taxon>
    </lineage>
</organism>
<sequence>MKIVEVKHPLVKHKLGLMREQDISTKRFRELASEVGSLLTYEATADLETEKVTIEGWNGPVEIDQIKGKKITVVPILRAGLGMMDGVLENVPSARISVVGMYRNEETLEPVPYFQKLVSNIDERMALIVDPMLATGGSVIATIDLLKKAGCSSIKVLVLVAAPEGIAALEKAHPDVELYTASIDQGLNEHGYIIPGLGDAGDKIFGTK</sequence>
<reference key="1">
    <citation type="journal article" date="2002" name="Proc. Natl. Acad. Sci. U.S.A.">
        <title>Extensive mosaic structure revealed by the complete genome sequence of uropathogenic Escherichia coli.</title>
        <authorList>
            <person name="Welch R.A."/>
            <person name="Burland V."/>
            <person name="Plunkett G. III"/>
            <person name="Redford P."/>
            <person name="Roesch P."/>
            <person name="Rasko D."/>
            <person name="Buckles E.L."/>
            <person name="Liou S.-R."/>
            <person name="Boutin A."/>
            <person name="Hackett J."/>
            <person name="Stroud D."/>
            <person name="Mayhew G.F."/>
            <person name="Rose D.J."/>
            <person name="Zhou S."/>
            <person name="Schwartz D.C."/>
            <person name="Perna N.T."/>
            <person name="Mobley H.L.T."/>
            <person name="Donnenberg M.S."/>
            <person name="Blattner F.R."/>
        </authorList>
    </citation>
    <scope>NUCLEOTIDE SEQUENCE [LARGE SCALE GENOMIC DNA]</scope>
    <source>
        <strain>CFT073 / ATCC 700928 / UPEC</strain>
    </source>
</reference>
<proteinExistence type="inferred from homology"/>
<feature type="chain" id="PRO_0000120825" description="Uracil phosphoribosyltransferase">
    <location>
        <begin position="1"/>
        <end position="208"/>
    </location>
</feature>
<feature type="binding site" evidence="1">
    <location>
        <position position="78"/>
    </location>
    <ligand>
        <name>5-phospho-alpha-D-ribose 1-diphosphate</name>
        <dbReference type="ChEBI" id="CHEBI:58017"/>
    </ligand>
</feature>
<feature type="binding site" evidence="1">
    <location>
        <position position="103"/>
    </location>
    <ligand>
        <name>5-phospho-alpha-D-ribose 1-diphosphate</name>
        <dbReference type="ChEBI" id="CHEBI:58017"/>
    </ligand>
</feature>
<feature type="binding site" evidence="1">
    <location>
        <begin position="130"/>
        <end position="138"/>
    </location>
    <ligand>
        <name>5-phospho-alpha-D-ribose 1-diphosphate</name>
        <dbReference type="ChEBI" id="CHEBI:58017"/>
    </ligand>
</feature>
<feature type="binding site" evidence="1">
    <location>
        <position position="193"/>
    </location>
    <ligand>
        <name>uracil</name>
        <dbReference type="ChEBI" id="CHEBI:17568"/>
    </ligand>
</feature>
<feature type="binding site" evidence="1">
    <location>
        <begin position="198"/>
        <end position="200"/>
    </location>
    <ligand>
        <name>uracil</name>
        <dbReference type="ChEBI" id="CHEBI:17568"/>
    </ligand>
</feature>
<feature type="binding site" evidence="1">
    <location>
        <position position="199"/>
    </location>
    <ligand>
        <name>5-phospho-alpha-D-ribose 1-diphosphate</name>
        <dbReference type="ChEBI" id="CHEBI:58017"/>
    </ligand>
</feature>
<keyword id="KW-0021">Allosteric enzyme</keyword>
<keyword id="KW-0328">Glycosyltransferase</keyword>
<keyword id="KW-0342">GTP-binding</keyword>
<keyword id="KW-0460">Magnesium</keyword>
<keyword id="KW-0547">Nucleotide-binding</keyword>
<keyword id="KW-1185">Reference proteome</keyword>
<keyword id="KW-0808">Transferase</keyword>
<name>UPP_ECOL6</name>
<accession>P0A8F1</accession>
<accession>P25532</accession>
<accession>P78095</accession>
<accession>Q8XAC7</accession>
<comment type="function">
    <text evidence="1">Catalyzes the conversion of uracil and 5-phospho-alpha-D-ribose 1-diphosphate (PRPP) to UMP and diphosphate.</text>
</comment>
<comment type="catalytic activity">
    <reaction evidence="1">
        <text>UMP + diphosphate = 5-phospho-alpha-D-ribose 1-diphosphate + uracil</text>
        <dbReference type="Rhea" id="RHEA:13017"/>
        <dbReference type="ChEBI" id="CHEBI:17568"/>
        <dbReference type="ChEBI" id="CHEBI:33019"/>
        <dbReference type="ChEBI" id="CHEBI:57865"/>
        <dbReference type="ChEBI" id="CHEBI:58017"/>
        <dbReference type="EC" id="2.4.2.9"/>
    </reaction>
</comment>
<comment type="cofactor">
    <cofactor evidence="1">
        <name>Mg(2+)</name>
        <dbReference type="ChEBI" id="CHEBI:18420"/>
    </cofactor>
    <text evidence="1">Binds 1 Mg(2+) ion per subunit. The magnesium is bound as Mg-PRPP.</text>
</comment>
<comment type="activity regulation">
    <text evidence="1">Allosterically activated by GTP.</text>
</comment>
<comment type="pathway">
    <text evidence="1">Pyrimidine metabolism; UMP biosynthesis via salvage pathway; UMP from uracil: step 1/1.</text>
</comment>
<comment type="similarity">
    <text evidence="1">Belongs to the UPRTase family.</text>
</comment>
<comment type="sequence caution" evidence="2">
    <conflict type="erroneous initiation">
        <sequence resource="EMBL-CDS" id="AAN81465"/>
    </conflict>
</comment>
<gene>
    <name evidence="1" type="primary">upp</name>
    <name type="ordered locus">c3015</name>
</gene>
<evidence type="ECO:0000255" key="1">
    <source>
        <dbReference type="HAMAP-Rule" id="MF_01218"/>
    </source>
</evidence>
<evidence type="ECO:0000305" key="2"/>
<dbReference type="EC" id="2.4.2.9" evidence="1"/>
<dbReference type="EMBL" id="AE014075">
    <property type="protein sequence ID" value="AAN81465.1"/>
    <property type="status" value="ALT_INIT"/>
    <property type="molecule type" value="Genomic_DNA"/>
</dbReference>
<dbReference type="RefSeq" id="WP_001295473.1">
    <property type="nucleotide sequence ID" value="NZ_CP051263.1"/>
</dbReference>
<dbReference type="SMR" id="P0A8F1"/>
<dbReference type="STRING" id="199310.c3015"/>
<dbReference type="GeneID" id="93774638"/>
<dbReference type="KEGG" id="ecc:c3015"/>
<dbReference type="eggNOG" id="COG0035">
    <property type="taxonomic scope" value="Bacteria"/>
</dbReference>
<dbReference type="HOGENOM" id="CLU_067096_2_2_6"/>
<dbReference type="UniPathway" id="UPA00574">
    <property type="reaction ID" value="UER00636"/>
</dbReference>
<dbReference type="Proteomes" id="UP000001410">
    <property type="component" value="Chromosome"/>
</dbReference>
<dbReference type="GO" id="GO:0005525">
    <property type="term" value="F:GTP binding"/>
    <property type="evidence" value="ECO:0007669"/>
    <property type="project" value="UniProtKB-KW"/>
</dbReference>
<dbReference type="GO" id="GO:0000287">
    <property type="term" value="F:magnesium ion binding"/>
    <property type="evidence" value="ECO:0007669"/>
    <property type="project" value="UniProtKB-UniRule"/>
</dbReference>
<dbReference type="GO" id="GO:0004845">
    <property type="term" value="F:uracil phosphoribosyltransferase activity"/>
    <property type="evidence" value="ECO:0007669"/>
    <property type="project" value="UniProtKB-UniRule"/>
</dbReference>
<dbReference type="GO" id="GO:0044206">
    <property type="term" value="P:UMP salvage"/>
    <property type="evidence" value="ECO:0007669"/>
    <property type="project" value="UniProtKB-UniRule"/>
</dbReference>
<dbReference type="GO" id="GO:0006223">
    <property type="term" value="P:uracil salvage"/>
    <property type="evidence" value="ECO:0007669"/>
    <property type="project" value="InterPro"/>
</dbReference>
<dbReference type="CDD" id="cd06223">
    <property type="entry name" value="PRTases_typeI"/>
    <property type="match status" value="1"/>
</dbReference>
<dbReference type="FunFam" id="3.40.50.2020:FF:000003">
    <property type="entry name" value="Uracil phosphoribosyltransferase"/>
    <property type="match status" value="1"/>
</dbReference>
<dbReference type="Gene3D" id="3.40.50.2020">
    <property type="match status" value="1"/>
</dbReference>
<dbReference type="HAMAP" id="MF_01218_B">
    <property type="entry name" value="Upp_B"/>
    <property type="match status" value="1"/>
</dbReference>
<dbReference type="InterPro" id="IPR000836">
    <property type="entry name" value="PRibTrfase_dom"/>
</dbReference>
<dbReference type="InterPro" id="IPR029057">
    <property type="entry name" value="PRTase-like"/>
</dbReference>
<dbReference type="InterPro" id="IPR034332">
    <property type="entry name" value="Upp_B"/>
</dbReference>
<dbReference type="InterPro" id="IPR050054">
    <property type="entry name" value="UPRTase/APRTase"/>
</dbReference>
<dbReference type="InterPro" id="IPR005765">
    <property type="entry name" value="Ura_phspho_trans"/>
</dbReference>
<dbReference type="NCBIfam" id="NF001097">
    <property type="entry name" value="PRK00129.1"/>
    <property type="match status" value="1"/>
</dbReference>
<dbReference type="NCBIfam" id="TIGR01091">
    <property type="entry name" value="upp"/>
    <property type="match status" value="1"/>
</dbReference>
<dbReference type="PANTHER" id="PTHR32315">
    <property type="entry name" value="ADENINE PHOSPHORIBOSYLTRANSFERASE"/>
    <property type="match status" value="1"/>
</dbReference>
<dbReference type="PANTHER" id="PTHR32315:SF4">
    <property type="entry name" value="URACIL PHOSPHORIBOSYLTRANSFERASE, CHLOROPLASTIC"/>
    <property type="match status" value="1"/>
</dbReference>
<dbReference type="Pfam" id="PF14681">
    <property type="entry name" value="UPRTase"/>
    <property type="match status" value="1"/>
</dbReference>
<dbReference type="SUPFAM" id="SSF53271">
    <property type="entry name" value="PRTase-like"/>
    <property type="match status" value="1"/>
</dbReference>